<organism>
    <name type="scientific">Archaeoglobus fulgidus (strain ATCC 49558 / DSM 4304 / JCM 9628 / NBRC 100126 / VC-16)</name>
    <dbReference type="NCBI Taxonomy" id="224325"/>
    <lineage>
        <taxon>Archaea</taxon>
        <taxon>Methanobacteriati</taxon>
        <taxon>Methanobacteriota</taxon>
        <taxon>Archaeoglobi</taxon>
        <taxon>Archaeoglobales</taxon>
        <taxon>Archaeoglobaceae</taxon>
        <taxon>Archaeoglobus</taxon>
    </lineage>
</organism>
<keyword id="KW-0002">3D-structure</keyword>
<keyword id="KW-0067">ATP-binding</keyword>
<keyword id="KW-1003">Cell membrane</keyword>
<keyword id="KW-0186">Copper</keyword>
<keyword id="KW-0187">Copper transport</keyword>
<keyword id="KW-0406">Ion transport</keyword>
<keyword id="KW-0460">Magnesium</keyword>
<keyword id="KW-0472">Membrane</keyword>
<keyword id="KW-0479">Metal-binding</keyword>
<keyword id="KW-0547">Nucleotide-binding</keyword>
<keyword id="KW-0597">Phosphoprotein</keyword>
<keyword id="KW-1185">Reference proteome</keyword>
<keyword id="KW-0677">Repeat</keyword>
<keyword id="KW-1278">Translocase</keyword>
<keyword id="KW-0812">Transmembrane</keyword>
<keyword id="KW-1133">Transmembrane helix</keyword>
<keyword id="KW-0813">Transport</keyword>
<protein>
    <recommendedName>
        <fullName>Probable copper-exporting P-type ATPase</fullName>
        <ecNumber evidence="7">7.2.2.8</ecNumber>
    </recommendedName>
    <alternativeName>
        <fullName>Copper-exporting P-type ATPase A</fullName>
    </alternativeName>
    <alternativeName>
        <fullName>Cu(+)-exporting ATPase</fullName>
    </alternativeName>
</protein>
<sequence>MVKDTYISSASKTPPMERTVRVTGMTCAMCVKSIETAVGSLEGVEEVRVNLATETAFIRFDEKRIDFETIKRVIEDLGYGVVDEQAAVSAEVEHLSRMKRKLYVAAFAGVLLLFLAHFISLPYEDFVQLLIALPAIFYSGSSIFKAAFSALRRRTLNMDVMYSMGVGAAFLASVLSTAGVLPREYSFYETSVLLLAFLLLGRTLEARAKSRTGEAIKKLVGLQAKTAVVIRDGKEIAVPVEEVAVGDIVIVRPGEKIPVDGVVVEGESYVDESMISGEPVPVLKSKGDEVFGATINNTGVLKIRATRVGGETLLAQIVKLVEDAMGSKPPIQRLADKVVAYFIPTVLLVAISAFIYWYFIAHAPLLFAFTTLIAVLVVACPCAFGLATPTALTVGMGKGAELGILIKNADALEVAEKVTAVIFDKTGTLTKGKPEVTDLVPLNGDERELLRLAAIAERRSEHPIAEAIVKKALEHGIELGEPEKVEVIAGEGVVADGILVGNKRLMEDFGVAVSNEVELALEKLEREAKTAVIVARNGRVEGIIAVSDTLKESAKPAVQELKRMGIKVGMITGDNWRSAEAISRELNLDLVIAEVLPHQKSEEVKKLQAKEVVAFVGDGINDAPALAQADLGIAVGSGSDVAVESGDIVLIRDDLRDVVAAIQLSRKTMSKIKQNIFWALIYNVILIPAAAGLLYPIFGVVFRPEFAGLAMAMSSVSVVANSLLLRNYVPPIRRGGDSVEKIVLELSGLSCHHCVARVKKALEEAGAKVEKVDLNEAVVAGNKEDVDKYIKAVEAAGYQAKLRS</sequence>
<evidence type="ECO:0000250" key="1"/>
<evidence type="ECO:0000255" key="2"/>
<evidence type="ECO:0000255" key="3">
    <source>
        <dbReference type="PROSITE-ProRule" id="PRU00280"/>
    </source>
</evidence>
<evidence type="ECO:0000269" key="4">
    <source>
    </source>
</evidence>
<evidence type="ECO:0000269" key="5">
    <source>
    </source>
</evidence>
<evidence type="ECO:0000269" key="6">
    <source>
    </source>
</evidence>
<evidence type="ECO:0000269" key="7">
    <source>
    </source>
</evidence>
<evidence type="ECO:0000269" key="8">
    <source>
    </source>
</evidence>
<evidence type="ECO:0000305" key="9"/>
<evidence type="ECO:0007829" key="10">
    <source>
        <dbReference type="PDB" id="2HC8"/>
    </source>
</evidence>
<evidence type="ECO:0007829" key="11">
    <source>
        <dbReference type="PDB" id="3A1C"/>
    </source>
</evidence>
<evidence type="ECO:0007829" key="12">
    <source>
        <dbReference type="PDB" id="3A1D"/>
    </source>
</evidence>
<evidence type="ECO:0007829" key="13">
    <source>
        <dbReference type="PDB" id="3FRY"/>
    </source>
</evidence>
<evidence type="ECO:0007829" key="14">
    <source>
        <dbReference type="PDB" id="7R0H"/>
    </source>
</evidence>
<evidence type="ECO:0007829" key="15">
    <source>
        <dbReference type="PDB" id="7R0I"/>
    </source>
</evidence>
<proteinExistence type="evidence at protein level"/>
<name>COPA_ARCFU</name>
<reference key="1">
    <citation type="journal article" date="1997" name="Nature">
        <title>The complete genome sequence of the hyperthermophilic, sulphate-reducing archaeon Archaeoglobus fulgidus.</title>
        <authorList>
            <person name="Klenk H.-P."/>
            <person name="Clayton R.A."/>
            <person name="Tomb J.-F."/>
            <person name="White O."/>
            <person name="Nelson K.E."/>
            <person name="Ketchum K.A."/>
            <person name="Dodson R.J."/>
            <person name="Gwinn M.L."/>
            <person name="Hickey E.K."/>
            <person name="Peterson J.D."/>
            <person name="Richardson D.L."/>
            <person name="Kerlavage A.R."/>
            <person name="Graham D.E."/>
            <person name="Kyrpides N.C."/>
            <person name="Fleischmann R.D."/>
            <person name="Quackenbush J."/>
            <person name="Lee N.H."/>
            <person name="Sutton G.G."/>
            <person name="Gill S.R."/>
            <person name="Kirkness E.F."/>
            <person name="Dougherty B.A."/>
            <person name="McKenney K."/>
            <person name="Adams M.D."/>
            <person name="Loftus B.J."/>
            <person name="Peterson S.N."/>
            <person name="Reich C.I."/>
            <person name="McNeil L.K."/>
            <person name="Badger J.H."/>
            <person name="Glodek A."/>
            <person name="Zhou L."/>
            <person name="Overbeek R."/>
            <person name="Gocayne J.D."/>
            <person name="Weidman J.F."/>
            <person name="McDonald L.A."/>
            <person name="Utterback T.R."/>
            <person name="Cotton M.D."/>
            <person name="Spriggs T."/>
            <person name="Artiach P."/>
            <person name="Kaine B.P."/>
            <person name="Sykes S.M."/>
            <person name="Sadow P.W."/>
            <person name="D'Andrea K.P."/>
            <person name="Bowman C."/>
            <person name="Fujii C."/>
            <person name="Garland S.A."/>
            <person name="Mason T.M."/>
            <person name="Olsen G.J."/>
            <person name="Fraser C.M."/>
            <person name="Smith H.O."/>
            <person name="Woese C.R."/>
            <person name="Venter J.C."/>
        </authorList>
    </citation>
    <scope>NUCLEOTIDE SEQUENCE [LARGE SCALE GENOMIC DNA]</scope>
    <source>
        <strain>ATCC 49558 / DSM 4304 / JCM 9628 / NBRC 100126 / VC-16</strain>
    </source>
</reference>
<reference key="2">
    <citation type="journal article" date="2002" name="J. Biol. Chem.">
        <title>Characterization of a thermophilic P-type Ag+/Cu+-ATPase from the extremophile Archaeoglobus fulgidus.</title>
        <authorList>
            <person name="Mandal A.K."/>
            <person name="Cheung W.D."/>
            <person name="Arguello J.M."/>
        </authorList>
    </citation>
    <scope>FUNCTION AS AN ATPASE</scope>
    <scope>ACTIVITY REGULATION</scope>
    <scope>INHIBITION BY VANADATE</scope>
    <scope>BIOPHYSICOCHEMICAL PROPERTIES</scope>
</reference>
<reference key="3">
    <citation type="journal article" date="2003" name="Ann. N. Y. Acad. Sci.">
        <title>Heavy metal transport CPx-ATPases from the thermophile Archaeoglobus fulgidus.</title>
        <authorList>
            <person name="Arguello J.M."/>
            <person name="Mandal A.K."/>
            <person name="Mana-Capelli S."/>
        </authorList>
    </citation>
    <scope>CHARACTERIZATION</scope>
    <scope>ATPASE ACTIVITY</scope>
    <scope>ACTIVITY REGULATION</scope>
    <scope>BIOPHYSICOCHEMICAL PROPERTIES</scope>
    <scope>MUTAGENESIS OF CYS-27; CYS-30; CYS-380; CYS-382; CYS-751 AND CYS-754</scope>
</reference>
<reference key="4">
    <citation type="journal article" date="2003" name="Biochemistry">
        <title>Functional roles of metal binding domains of the Archaeoglobus fulgidus Cu(+)-ATPase CopA.</title>
        <authorList>
            <person name="Mandal A.K."/>
            <person name="Arguello J.M."/>
        </authorList>
    </citation>
    <scope>MUTAGENESIS OF CYS-27; CYS-30; CYS-380; CYS-382; CYS-751 AND CYS-754</scope>
</reference>
<reference key="5">
    <citation type="journal article" date="2008" name="Proc. Natl. Acad. Sci. U.S.A.">
        <title>Mechanism of Cu+-transporting ATPases: soluble Cu+ chaperones directly transfer Cu+ to transmembrane transport sites.</title>
        <authorList>
            <person name="Gonzalez-Guerrero M."/>
            <person name="Arguello J.M."/>
        </authorList>
    </citation>
    <scope>REGULATION</scope>
    <scope>INTERACTION WITH COPZ</scope>
</reference>
<reference key="6">
    <citation type="journal article" date="2006" name="Biochemistry">
        <title>Structure of the actuator domain from the Archaeoglobus fulgidus Cu(+)-ATPase.</title>
        <authorList>
            <person name="Sazinsky M.H."/>
            <person name="Agarwal S."/>
            <person name="Arguello J.M."/>
            <person name="Rosenzweig A.C."/>
        </authorList>
    </citation>
    <scope>X-RAY CRYSTALLOGRAPHY (1.65 ANGSTROMS) OF 214-326</scope>
</reference>
<reference key="7">
    <citation type="journal article" date="2006" name="J. Biol. Chem.">
        <title>Structure of the ATP binding domain from the Archaeoglobus fulgidus Cu+-ATPase.</title>
        <authorList>
            <person name="Sazinsky M.H."/>
            <person name="Mandal A.K."/>
            <person name="Arguello J.M."/>
            <person name="Rosenzweig A.C."/>
        </authorList>
    </citation>
    <scope>X-RAY CRYSTALLOGRAPHY (2.3 ANGSTROMS) OF 407-671</scope>
    <scope>CATALYTIC ACTIVITY</scope>
</reference>
<dbReference type="EC" id="7.2.2.8" evidence="7"/>
<dbReference type="EMBL" id="AE000782">
    <property type="protein sequence ID" value="AAB90763.1"/>
    <property type="molecule type" value="Genomic_DNA"/>
</dbReference>
<dbReference type="PIR" id="A69309">
    <property type="entry name" value="A69309"/>
</dbReference>
<dbReference type="RefSeq" id="WP_010877980.1">
    <property type="nucleotide sequence ID" value="NC_000917.1"/>
</dbReference>
<dbReference type="PDB" id="2B8E">
    <property type="method" value="X-ray"/>
    <property type="resolution" value="2.30 A"/>
    <property type="chains" value="A/B/C=407-671"/>
</dbReference>
<dbReference type="PDB" id="2HC8">
    <property type="method" value="X-ray"/>
    <property type="resolution" value="1.65 A"/>
    <property type="chains" value="A=214-325"/>
</dbReference>
<dbReference type="PDB" id="2VOY">
    <property type="method" value="EM"/>
    <property type="resolution" value="18.00 A"/>
    <property type="chains" value="F=214-326, I=410-663, J=432-549"/>
</dbReference>
<dbReference type="PDB" id="3A1C">
    <property type="method" value="X-ray"/>
    <property type="resolution" value="1.85 A"/>
    <property type="chains" value="A/B=398-673"/>
</dbReference>
<dbReference type="PDB" id="3A1D">
    <property type="method" value="X-ray"/>
    <property type="resolution" value="1.85 A"/>
    <property type="chains" value="A/B=398-673"/>
</dbReference>
<dbReference type="PDB" id="3A1E">
    <property type="method" value="X-ray"/>
    <property type="resolution" value="1.95 A"/>
    <property type="chains" value="A/B=398-673"/>
</dbReference>
<dbReference type="PDB" id="3FRY">
    <property type="method" value="X-ray"/>
    <property type="resolution" value="2.00 A"/>
    <property type="chains" value="A/B=736-804"/>
</dbReference>
<dbReference type="PDB" id="3J08">
    <property type="method" value="EM"/>
    <property type="chains" value="A/B=93-737"/>
</dbReference>
<dbReference type="PDB" id="3J09">
    <property type="method" value="EM"/>
    <property type="chains" value="A/B=15-737"/>
</dbReference>
<dbReference type="PDB" id="7R0G">
    <property type="method" value="X-ray"/>
    <property type="resolution" value="4.01 A"/>
    <property type="chains" value="A/B=80-736"/>
</dbReference>
<dbReference type="PDB" id="7R0H">
    <property type="method" value="X-ray"/>
    <property type="resolution" value="3.31 A"/>
    <property type="chains" value="A=80-736"/>
</dbReference>
<dbReference type="PDB" id="7R0I">
    <property type="method" value="X-ray"/>
    <property type="resolution" value="2.70 A"/>
    <property type="chains" value="A=80-736"/>
</dbReference>
<dbReference type="PDBsum" id="2B8E"/>
<dbReference type="PDBsum" id="2HC8"/>
<dbReference type="PDBsum" id="2VOY"/>
<dbReference type="PDBsum" id="3A1C"/>
<dbReference type="PDBsum" id="3A1D"/>
<dbReference type="PDBsum" id="3A1E"/>
<dbReference type="PDBsum" id="3FRY"/>
<dbReference type="PDBsum" id="3J08"/>
<dbReference type="PDBsum" id="3J09"/>
<dbReference type="PDBsum" id="7R0G"/>
<dbReference type="PDBsum" id="7R0H"/>
<dbReference type="PDBsum" id="7R0I"/>
<dbReference type="EMDB" id="EMD-5004"/>
<dbReference type="EMDB" id="EMD-5005"/>
<dbReference type="SMR" id="O29777"/>
<dbReference type="DIP" id="DIP-46021N"/>
<dbReference type="STRING" id="224325.AF_0473"/>
<dbReference type="TCDB" id="3.A.3.5.7">
    <property type="family name" value="the p-type atpase (p-atpase) superfamily"/>
</dbReference>
<dbReference type="PaxDb" id="224325-AF_0473"/>
<dbReference type="EnsemblBacteria" id="AAB90763">
    <property type="protein sequence ID" value="AAB90763"/>
    <property type="gene ID" value="AF_0473"/>
</dbReference>
<dbReference type="GeneID" id="24794013"/>
<dbReference type="KEGG" id="afu:AF_0473"/>
<dbReference type="eggNOG" id="arCOG01576">
    <property type="taxonomic scope" value="Archaea"/>
</dbReference>
<dbReference type="eggNOG" id="arCOG02763">
    <property type="taxonomic scope" value="Archaea"/>
</dbReference>
<dbReference type="HOGENOM" id="CLU_001771_0_3_2"/>
<dbReference type="OrthoDB" id="8588at2157"/>
<dbReference type="PhylomeDB" id="O29777"/>
<dbReference type="BRENDA" id="7.2.2.8">
    <property type="organism ID" value="414"/>
</dbReference>
<dbReference type="SABIO-RK" id="O29777"/>
<dbReference type="EvolutionaryTrace" id="O29777"/>
<dbReference type="Proteomes" id="UP000002199">
    <property type="component" value="Chromosome"/>
</dbReference>
<dbReference type="GO" id="GO:0005886">
    <property type="term" value="C:plasma membrane"/>
    <property type="evidence" value="ECO:0007669"/>
    <property type="project" value="UniProtKB-SubCell"/>
</dbReference>
<dbReference type="GO" id="GO:0005524">
    <property type="term" value="F:ATP binding"/>
    <property type="evidence" value="ECO:0007669"/>
    <property type="project" value="UniProtKB-KW"/>
</dbReference>
<dbReference type="GO" id="GO:0016887">
    <property type="term" value="F:ATP hydrolysis activity"/>
    <property type="evidence" value="ECO:0007669"/>
    <property type="project" value="InterPro"/>
</dbReference>
<dbReference type="GO" id="GO:0005507">
    <property type="term" value="F:copper ion binding"/>
    <property type="evidence" value="ECO:0007669"/>
    <property type="project" value="InterPro"/>
</dbReference>
<dbReference type="GO" id="GO:0042802">
    <property type="term" value="F:identical protein binding"/>
    <property type="evidence" value="ECO:0000353"/>
    <property type="project" value="IntAct"/>
</dbReference>
<dbReference type="GO" id="GO:0043682">
    <property type="term" value="F:P-type divalent copper transporter activity"/>
    <property type="evidence" value="ECO:0007669"/>
    <property type="project" value="TreeGrafter"/>
</dbReference>
<dbReference type="GO" id="GO:0140581">
    <property type="term" value="F:P-type monovalent copper transporter activity"/>
    <property type="evidence" value="ECO:0007669"/>
    <property type="project" value="UniProtKB-EC"/>
</dbReference>
<dbReference type="GO" id="GO:0055070">
    <property type="term" value="P:copper ion homeostasis"/>
    <property type="evidence" value="ECO:0007669"/>
    <property type="project" value="TreeGrafter"/>
</dbReference>
<dbReference type="CDD" id="cd00371">
    <property type="entry name" value="HMA"/>
    <property type="match status" value="2"/>
</dbReference>
<dbReference type="CDD" id="cd02094">
    <property type="entry name" value="P-type_ATPase_Cu-like"/>
    <property type="match status" value="1"/>
</dbReference>
<dbReference type="FunFam" id="3.30.70.100:FF:000124">
    <property type="match status" value="1"/>
</dbReference>
<dbReference type="FunFam" id="2.70.150.10:FF:000002">
    <property type="entry name" value="Copper-transporting ATPase 1, putative"/>
    <property type="match status" value="1"/>
</dbReference>
<dbReference type="Gene3D" id="3.30.70.100">
    <property type="match status" value="2"/>
</dbReference>
<dbReference type="Gene3D" id="3.40.1110.10">
    <property type="entry name" value="Calcium-transporting ATPase, cytoplasmic domain N"/>
    <property type="match status" value="1"/>
</dbReference>
<dbReference type="Gene3D" id="2.70.150.10">
    <property type="entry name" value="Calcium-transporting ATPase, cytoplasmic transduction domain A"/>
    <property type="match status" value="1"/>
</dbReference>
<dbReference type="Gene3D" id="3.40.50.1000">
    <property type="entry name" value="HAD superfamily/HAD-like"/>
    <property type="match status" value="1"/>
</dbReference>
<dbReference type="InterPro" id="IPR023299">
    <property type="entry name" value="ATPase_P-typ_cyto_dom_N"/>
</dbReference>
<dbReference type="InterPro" id="IPR018303">
    <property type="entry name" value="ATPase_P-typ_P_site"/>
</dbReference>
<dbReference type="InterPro" id="IPR023298">
    <property type="entry name" value="ATPase_P-typ_TM_dom_sf"/>
</dbReference>
<dbReference type="InterPro" id="IPR008250">
    <property type="entry name" value="ATPase_P-typ_transduc_dom_A_sf"/>
</dbReference>
<dbReference type="InterPro" id="IPR036412">
    <property type="entry name" value="HAD-like_sf"/>
</dbReference>
<dbReference type="InterPro" id="IPR023214">
    <property type="entry name" value="HAD_sf"/>
</dbReference>
<dbReference type="InterPro" id="IPR017969">
    <property type="entry name" value="Heavy-metal-associated_CS"/>
</dbReference>
<dbReference type="InterPro" id="IPR006122">
    <property type="entry name" value="HMA_Cu_ion-bd"/>
</dbReference>
<dbReference type="InterPro" id="IPR006121">
    <property type="entry name" value="HMA_dom"/>
</dbReference>
<dbReference type="InterPro" id="IPR036163">
    <property type="entry name" value="HMA_dom_sf"/>
</dbReference>
<dbReference type="InterPro" id="IPR027256">
    <property type="entry name" value="P-typ_ATPase_IB"/>
</dbReference>
<dbReference type="InterPro" id="IPR001757">
    <property type="entry name" value="P_typ_ATPase"/>
</dbReference>
<dbReference type="InterPro" id="IPR044492">
    <property type="entry name" value="P_typ_ATPase_HD_dom"/>
</dbReference>
<dbReference type="NCBIfam" id="TIGR01511">
    <property type="entry name" value="ATPase-IB1_Cu"/>
    <property type="match status" value="1"/>
</dbReference>
<dbReference type="NCBIfam" id="TIGR01525">
    <property type="entry name" value="ATPase-IB_hvy"/>
    <property type="match status" value="1"/>
</dbReference>
<dbReference type="NCBIfam" id="TIGR01494">
    <property type="entry name" value="ATPase_P-type"/>
    <property type="match status" value="1"/>
</dbReference>
<dbReference type="NCBIfam" id="TIGR00003">
    <property type="entry name" value="copper ion binding protein"/>
    <property type="match status" value="1"/>
</dbReference>
<dbReference type="PANTHER" id="PTHR43520">
    <property type="entry name" value="ATP7, ISOFORM B"/>
    <property type="match status" value="1"/>
</dbReference>
<dbReference type="PANTHER" id="PTHR43520:SF8">
    <property type="entry name" value="P-TYPE CU(+) TRANSPORTER"/>
    <property type="match status" value="1"/>
</dbReference>
<dbReference type="Pfam" id="PF00122">
    <property type="entry name" value="E1-E2_ATPase"/>
    <property type="match status" value="1"/>
</dbReference>
<dbReference type="Pfam" id="PF00403">
    <property type="entry name" value="HMA"/>
    <property type="match status" value="1"/>
</dbReference>
<dbReference type="Pfam" id="PF00702">
    <property type="entry name" value="Hydrolase"/>
    <property type="match status" value="1"/>
</dbReference>
<dbReference type="PRINTS" id="PR00119">
    <property type="entry name" value="CATATPASE"/>
</dbReference>
<dbReference type="PRINTS" id="PR00943">
    <property type="entry name" value="CUATPASE"/>
</dbReference>
<dbReference type="SFLD" id="SFLDG00002">
    <property type="entry name" value="C1.7:_P-type_atpase_like"/>
    <property type="match status" value="1"/>
</dbReference>
<dbReference type="SFLD" id="SFLDF00027">
    <property type="entry name" value="p-type_atpase"/>
    <property type="match status" value="1"/>
</dbReference>
<dbReference type="SUPFAM" id="SSF81653">
    <property type="entry name" value="Calcium ATPase, transduction domain A"/>
    <property type="match status" value="1"/>
</dbReference>
<dbReference type="SUPFAM" id="SSF81665">
    <property type="entry name" value="Calcium ATPase, transmembrane domain M"/>
    <property type="match status" value="1"/>
</dbReference>
<dbReference type="SUPFAM" id="SSF56784">
    <property type="entry name" value="HAD-like"/>
    <property type="match status" value="1"/>
</dbReference>
<dbReference type="SUPFAM" id="SSF55008">
    <property type="entry name" value="HMA, heavy metal-associated domain"/>
    <property type="match status" value="2"/>
</dbReference>
<dbReference type="PROSITE" id="PS00154">
    <property type="entry name" value="ATPASE_E1_E2"/>
    <property type="match status" value="1"/>
</dbReference>
<dbReference type="PROSITE" id="PS01047">
    <property type="entry name" value="HMA_1"/>
    <property type="match status" value="1"/>
</dbReference>
<dbReference type="PROSITE" id="PS50846">
    <property type="entry name" value="HMA_2"/>
    <property type="match status" value="2"/>
</dbReference>
<gene>
    <name type="primary">copA</name>
    <name type="synonym">pacS</name>
    <name type="ordered locus">AF_0473</name>
</gene>
<comment type="function">
    <text evidence="4">Probably involved in copper and silver export.</text>
</comment>
<comment type="catalytic activity">
    <reaction evidence="7">
        <text>Cu(+)(in) + ATP + H2O = Cu(+)(out) + ADP + phosphate + H(+)</text>
        <dbReference type="Rhea" id="RHEA:25792"/>
        <dbReference type="ChEBI" id="CHEBI:15377"/>
        <dbReference type="ChEBI" id="CHEBI:15378"/>
        <dbReference type="ChEBI" id="CHEBI:30616"/>
        <dbReference type="ChEBI" id="CHEBI:43474"/>
        <dbReference type="ChEBI" id="CHEBI:49552"/>
        <dbReference type="ChEBI" id="CHEBI:456216"/>
        <dbReference type="EC" id="7.2.2.8"/>
    </reaction>
</comment>
<comment type="activity regulation">
    <text evidence="4 5">Activated by Cu(+) and Ag(+) and inhibited by vanadate. Activated by CopZ in its Cu(+)-bound form.</text>
</comment>
<comment type="biophysicochemical properties">
    <kinetics>
        <KM evidence="4 5">0.25 mM for ATP</KM>
        <Vmax evidence="4 5">14.9 umol/h/mg enzyme with Ag(+) as substrate</Vmax>
        <Vmax evidence="4 5">3.7 umol/h/mg enzyme with Cu(+) as substrate</Vmax>
        <text>Shows higher affinity for Cu(+) compared with Ag(+).</text>
    </kinetics>
    <phDependence>
        <text evidence="4 5">Optimum pH is 6.1-6.5.</text>
    </phDependence>
    <temperatureDependence>
        <text evidence="4 5">Optimum temperature is 75 degrees Celsius.</text>
    </temperatureDependence>
</comment>
<comment type="subunit">
    <text evidence="8">Interacts with CopZ probably in the CopZ Cu(+)-bound form.</text>
</comment>
<comment type="interaction">
    <interactant intactId="EBI-9016967">
        <id>O29777</id>
    </interactant>
    <interactant intactId="EBI-9016967">
        <id>O29777</id>
        <label>copA</label>
    </interactant>
    <organismsDiffer>false</organismsDiffer>
    <experiments>2</experiments>
</comment>
<comment type="subcellular location">
    <subcellularLocation>
        <location>Cell membrane</location>
        <topology>Multi-pass membrane protein</topology>
    </subcellularLocation>
</comment>
<comment type="similarity">
    <text evidence="9">Belongs to the cation transport ATPase (P-type) (TC 3.A.3) family. Type IB subfamily.</text>
</comment>
<accession>O29777</accession>
<feature type="chain" id="PRO_0000350601" description="Probable copper-exporting P-type ATPase">
    <location>
        <begin position="1"/>
        <end position="804"/>
    </location>
</feature>
<feature type="topological domain" description="Cytoplasmic" evidence="2">
    <location>
        <begin position="1"/>
        <end position="101"/>
    </location>
</feature>
<feature type="transmembrane region" description="Helical" evidence="2">
    <location>
        <begin position="102"/>
        <end position="122"/>
    </location>
</feature>
<feature type="topological domain" description="Extracellular" evidence="2">
    <location>
        <begin position="123"/>
        <end position="128"/>
    </location>
</feature>
<feature type="transmembrane region" description="Helical" evidence="2">
    <location>
        <begin position="129"/>
        <end position="149"/>
    </location>
</feature>
<feature type="topological domain" description="Cytoplasmic" evidence="2">
    <location>
        <begin position="150"/>
        <end position="159"/>
    </location>
</feature>
<feature type="transmembrane region" description="Helical" evidence="2">
    <location>
        <begin position="160"/>
        <end position="180"/>
    </location>
</feature>
<feature type="topological domain" description="Extracellular" evidence="2">
    <location>
        <begin position="181"/>
        <end position="186"/>
    </location>
</feature>
<feature type="transmembrane region" description="Helical" evidence="2">
    <location>
        <begin position="187"/>
        <end position="204"/>
    </location>
</feature>
<feature type="topological domain" description="Cytoplasmic" evidence="2">
    <location>
        <begin position="205"/>
        <end position="339"/>
    </location>
</feature>
<feature type="transmembrane region" description="Helical" evidence="2">
    <location>
        <begin position="340"/>
        <end position="360"/>
    </location>
</feature>
<feature type="topological domain" description="Extracellular" evidence="2">
    <location>
        <begin position="361"/>
        <end position="364"/>
    </location>
</feature>
<feature type="transmembrane region" description="Helical" evidence="2">
    <location>
        <begin position="365"/>
        <end position="385"/>
    </location>
</feature>
<feature type="topological domain" description="Cytoplasmic" evidence="2">
    <location>
        <begin position="386"/>
        <end position="680"/>
    </location>
</feature>
<feature type="transmembrane region" description="Helical" evidence="2">
    <location>
        <begin position="681"/>
        <end position="701"/>
    </location>
</feature>
<feature type="topological domain" description="Extracellular" evidence="2">
    <location>
        <begin position="702"/>
        <end position="704"/>
    </location>
</feature>
<feature type="transmembrane region" description="Helical" evidence="2">
    <location>
        <begin position="705"/>
        <end position="725"/>
    </location>
</feature>
<feature type="topological domain" description="Cytoplasmic" evidence="2">
    <location>
        <begin position="726"/>
        <end position="804"/>
    </location>
</feature>
<feature type="domain" description="HMA 1" evidence="3">
    <location>
        <begin position="16"/>
        <end position="82"/>
    </location>
</feature>
<feature type="domain" description="HMA 2" evidence="3">
    <location>
        <begin position="740"/>
        <end position="801"/>
    </location>
</feature>
<feature type="active site" description="4-aspartylphosphate intermediate" evidence="1">
    <location>
        <position position="424"/>
    </location>
</feature>
<feature type="binding site" evidence="3">
    <location>
        <position position="27"/>
    </location>
    <ligand>
        <name>Cu(+)</name>
        <dbReference type="ChEBI" id="CHEBI:49552"/>
        <label>1</label>
    </ligand>
</feature>
<feature type="binding site" evidence="3">
    <location>
        <position position="30"/>
    </location>
    <ligand>
        <name>Cu(+)</name>
        <dbReference type="ChEBI" id="CHEBI:49552"/>
        <label>1</label>
    </ligand>
</feature>
<feature type="binding site" evidence="2">
    <location>
        <begin position="457"/>
        <end position="462"/>
    </location>
    <ligand>
        <name>ATP</name>
        <dbReference type="ChEBI" id="CHEBI:30616"/>
    </ligand>
</feature>
<feature type="binding site" evidence="2">
    <location>
        <begin position="490"/>
        <end position="501"/>
    </location>
    <ligand>
        <name>ATP</name>
        <dbReference type="ChEBI" id="CHEBI:30616"/>
    </ligand>
</feature>
<feature type="binding site">
    <location>
        <position position="618"/>
    </location>
    <ligand>
        <name>Mg(2+)</name>
        <dbReference type="ChEBI" id="CHEBI:18420"/>
    </ligand>
</feature>
<feature type="binding site">
    <location>
        <position position="622"/>
    </location>
    <ligand>
        <name>Mg(2+)</name>
        <dbReference type="ChEBI" id="CHEBI:18420"/>
    </ligand>
</feature>
<feature type="binding site" evidence="3">
    <location>
        <position position="751"/>
    </location>
    <ligand>
        <name>Cu(+)</name>
        <dbReference type="ChEBI" id="CHEBI:49552"/>
        <label>2</label>
    </ligand>
</feature>
<feature type="binding site" evidence="3">
    <location>
        <position position="754"/>
    </location>
    <ligand>
        <name>Cu(+)</name>
        <dbReference type="ChEBI" id="CHEBI:49552"/>
        <label>2</label>
    </ligand>
</feature>
<feature type="mutagenesis site" description="Reduction in ATPase activity; when associated with A-30." evidence="5 6">
    <original>C</original>
    <variation>A</variation>
    <location>
        <position position="27"/>
    </location>
</feature>
<feature type="mutagenesis site" description="Reduction in ATPase activity; when associated with A-27." evidence="5 6">
    <original>C</original>
    <variation>A</variation>
    <location>
        <position position="30"/>
    </location>
</feature>
<feature type="mutagenesis site" description="Abolishes activity." evidence="5 6">
    <original>C</original>
    <variation>A</variation>
    <location>
        <position position="380"/>
    </location>
</feature>
<feature type="mutagenesis site" description="Abolishes activity." evidence="5 6">
    <original>C</original>
    <variation>A</variation>
    <variation>S</variation>
    <location>
        <position position="382"/>
    </location>
</feature>
<feature type="mutagenesis site" description="No effect on ATPase activity; when associated with A-754. Reduction in ATPase activity; when associated with A-27; A-30 and A-754." evidence="5 6">
    <original>C</original>
    <variation>A</variation>
    <location>
        <position position="751"/>
    </location>
</feature>
<feature type="mutagenesis site" description="No effect on ATPase activity, when associated with A-751. Reduction in ATPase activity; when associated with A-27; A-30 and A-751." evidence="5 6">
    <original>C</original>
    <variation>A</variation>
    <location>
        <position position="754"/>
    </location>
</feature>
<feature type="helix" evidence="15">
    <location>
        <begin position="87"/>
        <end position="116"/>
    </location>
</feature>
<feature type="strand" evidence="14">
    <location>
        <begin position="119"/>
        <end position="121"/>
    </location>
</feature>
<feature type="helix" evidence="15">
    <location>
        <begin position="125"/>
        <end position="152"/>
    </location>
</feature>
<feature type="helix" evidence="15">
    <location>
        <begin position="158"/>
        <end position="178"/>
    </location>
</feature>
<feature type="strand" evidence="15">
    <location>
        <begin position="179"/>
        <end position="181"/>
    </location>
</feature>
<feature type="turn" evidence="15">
    <location>
        <begin position="190"/>
        <end position="192"/>
    </location>
</feature>
<feature type="helix" evidence="10">
    <location>
        <begin position="215"/>
        <end position="222"/>
    </location>
</feature>
<feature type="strand" evidence="10">
    <location>
        <begin position="225"/>
        <end position="231"/>
    </location>
</feature>
<feature type="strand" evidence="10">
    <location>
        <begin position="234"/>
        <end position="239"/>
    </location>
</feature>
<feature type="helix" evidence="10">
    <location>
        <begin position="240"/>
        <end position="242"/>
    </location>
</feature>
<feature type="strand" evidence="10">
    <location>
        <begin position="248"/>
        <end position="251"/>
    </location>
</feature>
<feature type="strand" evidence="10">
    <location>
        <begin position="259"/>
        <end position="265"/>
    </location>
</feature>
<feature type="strand" evidence="10">
    <location>
        <begin position="268"/>
        <end position="271"/>
    </location>
</feature>
<feature type="helix" evidence="10">
    <location>
        <begin position="273"/>
        <end position="276"/>
    </location>
</feature>
<feature type="strand" evidence="10">
    <location>
        <begin position="282"/>
        <end position="284"/>
    </location>
</feature>
<feature type="strand" evidence="14">
    <location>
        <begin position="294"/>
        <end position="296"/>
    </location>
</feature>
<feature type="strand" evidence="10">
    <location>
        <begin position="301"/>
        <end position="307"/>
    </location>
</feature>
<feature type="helix" evidence="10">
    <location>
        <begin position="309"/>
        <end position="311"/>
    </location>
</feature>
<feature type="helix" evidence="10">
    <location>
        <begin position="313"/>
        <end position="325"/>
    </location>
</feature>
<feature type="helix" evidence="15">
    <location>
        <begin position="330"/>
        <end position="359"/>
    </location>
</feature>
<feature type="helix" evidence="15">
    <location>
        <begin position="365"/>
        <end position="379"/>
    </location>
</feature>
<feature type="helix" evidence="15">
    <location>
        <begin position="384"/>
        <end position="401"/>
    </location>
</feature>
<feature type="strand" evidence="11">
    <location>
        <begin position="404"/>
        <end position="406"/>
    </location>
</feature>
<feature type="helix" evidence="11">
    <location>
        <begin position="411"/>
        <end position="417"/>
    </location>
</feature>
<feature type="strand" evidence="11">
    <location>
        <begin position="420"/>
        <end position="424"/>
    </location>
</feature>
<feature type="helix" evidence="11">
    <location>
        <begin position="425"/>
        <end position="429"/>
    </location>
</feature>
<feature type="strand" evidence="11">
    <location>
        <begin position="435"/>
        <end position="444"/>
    </location>
</feature>
<feature type="helix" evidence="11">
    <location>
        <begin position="446"/>
        <end position="456"/>
    </location>
</feature>
<feature type="turn" evidence="11">
    <location>
        <begin position="457"/>
        <end position="459"/>
    </location>
</feature>
<feature type="helix" evidence="11">
    <location>
        <begin position="463"/>
        <end position="474"/>
    </location>
</feature>
<feature type="strand" evidence="11">
    <location>
        <begin position="485"/>
        <end position="488"/>
    </location>
</feature>
<feature type="turn" evidence="11">
    <location>
        <begin position="489"/>
        <end position="491"/>
    </location>
</feature>
<feature type="strand" evidence="11">
    <location>
        <begin position="492"/>
        <end position="495"/>
    </location>
</feature>
<feature type="strand" evidence="11">
    <location>
        <begin position="498"/>
        <end position="501"/>
    </location>
</feature>
<feature type="helix" evidence="11">
    <location>
        <begin position="503"/>
        <end position="508"/>
    </location>
</feature>
<feature type="helix" evidence="11">
    <location>
        <begin position="515"/>
        <end position="526"/>
    </location>
</feature>
<feature type="strand" evidence="11">
    <location>
        <begin position="530"/>
        <end position="536"/>
    </location>
</feature>
<feature type="strand" evidence="11">
    <location>
        <begin position="539"/>
        <end position="547"/>
    </location>
</feature>
<feature type="helix" evidence="11">
    <location>
        <begin position="554"/>
        <end position="563"/>
    </location>
</feature>
<feature type="strand" evidence="11">
    <location>
        <begin position="567"/>
        <end position="571"/>
    </location>
</feature>
<feature type="helix" evidence="11">
    <location>
        <begin position="576"/>
        <end position="586"/>
    </location>
</feature>
<feature type="strand" evidence="11">
    <location>
        <begin position="589"/>
        <end position="592"/>
    </location>
</feature>
<feature type="helix" evidence="12">
    <location>
        <begin position="597"/>
        <end position="599"/>
    </location>
</feature>
<feature type="helix" evidence="11">
    <location>
        <begin position="600"/>
        <end position="607"/>
    </location>
</feature>
<feature type="turn" evidence="11">
    <location>
        <begin position="608"/>
        <end position="610"/>
    </location>
</feature>
<feature type="strand" evidence="11">
    <location>
        <begin position="613"/>
        <end position="617"/>
    </location>
</feature>
<feature type="turn" evidence="11">
    <location>
        <begin position="619"/>
        <end position="621"/>
    </location>
</feature>
<feature type="helix" evidence="11">
    <location>
        <begin position="623"/>
        <end position="628"/>
    </location>
</feature>
<feature type="strand" evidence="11">
    <location>
        <begin position="629"/>
        <end position="635"/>
    </location>
</feature>
<feature type="helix" evidence="15">
    <location>
        <begin position="638"/>
        <end position="643"/>
    </location>
</feature>
<feature type="strand" evidence="11">
    <location>
        <begin position="646"/>
        <end position="653"/>
    </location>
</feature>
<feature type="helix" evidence="11">
    <location>
        <begin position="656"/>
        <end position="663"/>
    </location>
</feature>
<feature type="strand" evidence="15">
    <location>
        <begin position="691"/>
        <end position="693"/>
    </location>
</feature>
<feature type="strand" evidence="14">
    <location>
        <begin position="695"/>
        <end position="698"/>
    </location>
</feature>
<feature type="helix" evidence="15">
    <location>
        <begin position="704"/>
        <end position="723"/>
    </location>
</feature>
<feature type="helix" evidence="15">
    <location>
        <begin position="724"/>
        <end position="727"/>
    </location>
</feature>
<feature type="helix" evidence="15">
    <location>
        <begin position="731"/>
        <end position="733"/>
    </location>
</feature>
<feature type="strand" evidence="13">
    <location>
        <begin position="740"/>
        <end position="750"/>
    </location>
</feature>
<feature type="helix" evidence="13">
    <location>
        <begin position="752"/>
        <end position="754"/>
    </location>
</feature>
<feature type="helix" evidence="13">
    <location>
        <begin position="755"/>
        <end position="764"/>
    </location>
</feature>
<feature type="strand" evidence="13">
    <location>
        <begin position="768"/>
        <end position="772"/>
    </location>
</feature>
<feature type="strand" evidence="13">
    <location>
        <begin position="774"/>
        <end position="782"/>
    </location>
</feature>
<feature type="helix" evidence="13">
    <location>
        <begin position="783"/>
        <end position="785"/>
    </location>
</feature>
<feature type="helix" evidence="13">
    <location>
        <begin position="786"/>
        <end position="795"/>
    </location>
</feature>
<feature type="strand" evidence="13">
    <location>
        <begin position="799"/>
        <end position="802"/>
    </location>
</feature>